<protein>
    <recommendedName>
        <fullName>Glycosyl-4,4'-diaponeurosporenoate acyltransferase</fullName>
        <ecNumber>2.3.1.-</ecNumber>
    </recommendedName>
</protein>
<organism>
    <name type="scientific">Staphylococcus aureus (strain NCTC 8325 / PS 47)</name>
    <dbReference type="NCBI Taxonomy" id="93061"/>
    <lineage>
        <taxon>Bacteria</taxon>
        <taxon>Bacillati</taxon>
        <taxon>Bacillota</taxon>
        <taxon>Bacilli</taxon>
        <taxon>Bacillales</taxon>
        <taxon>Staphylococcaceae</taxon>
        <taxon>Staphylococcus</taxon>
    </lineage>
</organism>
<dbReference type="EC" id="2.3.1.-"/>
<dbReference type="EMBL" id="CP000253">
    <property type="protein sequence ID" value="ABD31879.1"/>
    <property type="status" value="ALT_INIT"/>
    <property type="molecule type" value="Genomic_DNA"/>
</dbReference>
<dbReference type="RefSeq" id="YP_501336.1">
    <property type="nucleotide sequence ID" value="NC_007795.1"/>
</dbReference>
<dbReference type="STRING" id="93061.SAOUHSC_02882"/>
<dbReference type="PaxDb" id="1280-SAXN108_2816"/>
<dbReference type="GeneID" id="3921552"/>
<dbReference type="KEGG" id="sao:SAOUHSC_02882"/>
<dbReference type="PATRIC" id="fig|93061.5.peg.2605"/>
<dbReference type="eggNOG" id="ENOG503340V">
    <property type="taxonomic scope" value="Bacteria"/>
</dbReference>
<dbReference type="HOGENOM" id="CLU_133300_0_0_9"/>
<dbReference type="OrthoDB" id="3783432at2"/>
<dbReference type="UniPathway" id="UPA00029">
    <property type="reaction ID" value="UER00560"/>
</dbReference>
<dbReference type="Proteomes" id="UP000008816">
    <property type="component" value="Chromosome"/>
</dbReference>
<dbReference type="GO" id="GO:0005886">
    <property type="term" value="C:plasma membrane"/>
    <property type="evidence" value="ECO:0007669"/>
    <property type="project" value="UniProtKB-SubCell"/>
</dbReference>
<dbReference type="GO" id="GO:0016746">
    <property type="term" value="F:acyltransferase activity"/>
    <property type="evidence" value="ECO:0007669"/>
    <property type="project" value="UniProtKB-KW"/>
</dbReference>
<dbReference type="GO" id="GO:0016117">
    <property type="term" value="P:carotenoid biosynthetic process"/>
    <property type="evidence" value="ECO:0007669"/>
    <property type="project" value="UniProtKB-KW"/>
</dbReference>
<dbReference type="InterPro" id="IPR044021">
    <property type="entry name" value="CrtO"/>
</dbReference>
<dbReference type="Pfam" id="PF18927">
    <property type="entry name" value="CrtO"/>
    <property type="match status" value="1"/>
</dbReference>
<proteinExistence type="inferred from homology"/>
<reference key="1">
    <citation type="book" date="2006" name="Gram positive pathogens, 2nd edition">
        <title>The Staphylococcus aureus NCTC 8325 genome.</title>
        <editorList>
            <person name="Fischetti V."/>
            <person name="Novick R."/>
            <person name="Ferretti J."/>
            <person name="Portnoy D."/>
            <person name="Rood J."/>
        </editorList>
        <authorList>
            <person name="Gillaspy A.F."/>
            <person name="Worrell V."/>
            <person name="Orvis J."/>
            <person name="Roe B.A."/>
            <person name="Dyer D.W."/>
            <person name="Iandolo J.J."/>
        </authorList>
    </citation>
    <scope>NUCLEOTIDE SEQUENCE [LARGE SCALE GENOMIC DNA]</scope>
    <source>
        <strain>NCTC 8325 / PS 47</strain>
    </source>
</reference>
<comment type="function">
    <text evidence="1">Catalyzes the acylation of glycosyl-4,4'-diaponeurosporenoate, i.e. the esterification of glucose at the C6'' position with the carboxyl group of the C(15) fatty acid 12-methyltetradecanoic acid, to yield staphyloxanthin. This is the last step in the biosynthesis of this orange pigment, present in most staphylococci strains (By similarity).</text>
</comment>
<comment type="pathway">
    <text>Carotenoid biosynthesis; staphyloxanthin biosynthesis; staphyloxanthin from farnesyl diphosphate: step 5/5.</text>
</comment>
<comment type="subcellular location">
    <subcellularLocation>
        <location evidence="3">Cell membrane</location>
        <topology evidence="3">Single-pass membrane protein</topology>
    </subcellularLocation>
</comment>
<comment type="similarity">
    <text evidence="3">Belongs to the acyltransferase CrtO family.</text>
</comment>
<comment type="sequence caution" evidence="3">
    <conflict type="erroneous initiation">
        <sequence resource="EMBL-CDS" id="ABD31879"/>
    </conflict>
</comment>
<feature type="signal peptide" evidence="2">
    <location>
        <begin position="1"/>
        <end position="28"/>
    </location>
</feature>
<feature type="chain" id="PRO_0000284854" description="Glycosyl-4,4'-diaponeurosporenoate acyltransferase">
    <location>
        <begin position="29"/>
        <end position="165"/>
    </location>
</feature>
<feature type="transmembrane region" description="Helical" evidence="2">
    <location>
        <begin position="126"/>
        <end position="145"/>
    </location>
</feature>
<sequence length="165" mass="20319">MKTMKKYIKTAFFCSMYWLIVQLNIANLGTRIPDKYFRQKYIIFKSFNFEKHGKFWNKWFYVRKWKHKILDGHQLNQNIYDQRHLMTINTDEIEKMIIETKRAELIHWISILPVIIFNKGPRLVKYINIFYAMIANVPIIIVQRYNRPRLTQLLRILKRRGERHD</sequence>
<evidence type="ECO:0000250" key="1"/>
<evidence type="ECO:0000255" key="2"/>
<evidence type="ECO:0000305" key="3"/>
<accession>Q2FV56</accession>
<keyword id="KW-0012">Acyltransferase</keyword>
<keyword id="KW-0125">Carotenoid biosynthesis</keyword>
<keyword id="KW-1003">Cell membrane</keyword>
<keyword id="KW-0472">Membrane</keyword>
<keyword id="KW-1185">Reference proteome</keyword>
<keyword id="KW-0732">Signal</keyword>
<keyword id="KW-0808">Transferase</keyword>
<keyword id="KW-0812">Transmembrane</keyword>
<keyword id="KW-1133">Transmembrane helix</keyword>
<gene>
    <name type="primary">crtO</name>
    <name type="ordered locus">SAOUHSC_02882</name>
</gene>
<name>CRTO_STAA8</name>